<sequence>MFSQTLSKIINRKDLSREEMDRIFSDIFSGNLTDAQIGAFMAALATKGETFEELAGAAEAMRRKATRIQAASPVVVDTCGTGGDGAHTFNISTTSAFVVAGAGICVAKHGNRSVSSKCGSADVLEALGVKLDTQPEVAEEAVNEIGIGFLFAPLFHGAMKYAIVPRKELGVRTIFNMLGPLTNPAAANCQVLGVFAPQLTEMFADALNLLGARRAFVVHGHDGLDEISVCASTRVSELNDGRVQTYDISPEHFFEDRARPEDMAGGTPSENAQITRHILSGKEKGPRRNVVVVNAGAALVAAGKAEDLKAGVALAGQIIDSGKAHEKLEQLIEFTKSNG</sequence>
<comment type="function">
    <text evidence="1">Catalyzes the transfer of the phosphoribosyl group of 5-phosphorylribose-1-pyrophosphate (PRPP) to anthranilate to yield N-(5'-phosphoribosyl)-anthranilate (PRA).</text>
</comment>
<comment type="catalytic activity">
    <reaction evidence="1">
        <text>N-(5-phospho-beta-D-ribosyl)anthranilate + diphosphate = 5-phospho-alpha-D-ribose 1-diphosphate + anthranilate</text>
        <dbReference type="Rhea" id="RHEA:11768"/>
        <dbReference type="ChEBI" id="CHEBI:16567"/>
        <dbReference type="ChEBI" id="CHEBI:18277"/>
        <dbReference type="ChEBI" id="CHEBI:33019"/>
        <dbReference type="ChEBI" id="CHEBI:58017"/>
        <dbReference type="EC" id="2.4.2.18"/>
    </reaction>
</comment>
<comment type="cofactor">
    <cofactor evidence="1">
        <name>Mg(2+)</name>
        <dbReference type="ChEBI" id="CHEBI:18420"/>
    </cofactor>
    <text evidence="1">Binds 2 magnesium ions per monomer.</text>
</comment>
<comment type="pathway">
    <text evidence="1">Amino-acid biosynthesis; L-tryptophan biosynthesis; L-tryptophan from chorismate: step 2/5.</text>
</comment>
<comment type="subunit">
    <text evidence="1">Homodimer.</text>
</comment>
<comment type="similarity">
    <text evidence="1">Belongs to the anthranilate phosphoribosyltransferase family.</text>
</comment>
<evidence type="ECO:0000255" key="1">
    <source>
        <dbReference type="HAMAP-Rule" id="MF_00211"/>
    </source>
</evidence>
<keyword id="KW-0028">Amino-acid biosynthesis</keyword>
<keyword id="KW-0057">Aromatic amino acid biosynthesis</keyword>
<keyword id="KW-0328">Glycosyltransferase</keyword>
<keyword id="KW-0460">Magnesium</keyword>
<keyword id="KW-0479">Metal-binding</keyword>
<keyword id="KW-1185">Reference proteome</keyword>
<keyword id="KW-0808">Transferase</keyword>
<keyword id="KW-0822">Tryptophan biosynthesis</keyword>
<protein>
    <recommendedName>
        <fullName evidence="1">Anthranilate phosphoribosyltransferase</fullName>
        <ecNumber evidence="1">2.4.2.18</ecNumber>
    </recommendedName>
</protein>
<dbReference type="EC" id="2.4.2.18" evidence="1"/>
<dbReference type="EMBL" id="CP000859">
    <property type="protein sequence ID" value="ABW67371.1"/>
    <property type="molecule type" value="Genomic_DNA"/>
</dbReference>
<dbReference type="RefSeq" id="WP_012174987.1">
    <property type="nucleotide sequence ID" value="NC_009943.1"/>
</dbReference>
<dbReference type="SMR" id="A8ZZX1"/>
<dbReference type="STRING" id="96561.Dole_1567"/>
<dbReference type="KEGG" id="dol:Dole_1567"/>
<dbReference type="eggNOG" id="COG0547">
    <property type="taxonomic scope" value="Bacteria"/>
</dbReference>
<dbReference type="HOGENOM" id="CLU_034315_2_1_7"/>
<dbReference type="OrthoDB" id="9806430at2"/>
<dbReference type="UniPathway" id="UPA00035">
    <property type="reaction ID" value="UER00041"/>
</dbReference>
<dbReference type="Proteomes" id="UP000008561">
    <property type="component" value="Chromosome"/>
</dbReference>
<dbReference type="GO" id="GO:0005829">
    <property type="term" value="C:cytosol"/>
    <property type="evidence" value="ECO:0007669"/>
    <property type="project" value="TreeGrafter"/>
</dbReference>
<dbReference type="GO" id="GO:0004048">
    <property type="term" value="F:anthranilate phosphoribosyltransferase activity"/>
    <property type="evidence" value="ECO:0007669"/>
    <property type="project" value="UniProtKB-UniRule"/>
</dbReference>
<dbReference type="GO" id="GO:0000287">
    <property type="term" value="F:magnesium ion binding"/>
    <property type="evidence" value="ECO:0007669"/>
    <property type="project" value="UniProtKB-UniRule"/>
</dbReference>
<dbReference type="GO" id="GO:0000162">
    <property type="term" value="P:L-tryptophan biosynthetic process"/>
    <property type="evidence" value="ECO:0007669"/>
    <property type="project" value="UniProtKB-UniRule"/>
</dbReference>
<dbReference type="FunFam" id="3.40.1030.10:FF:000002">
    <property type="entry name" value="Anthranilate phosphoribosyltransferase"/>
    <property type="match status" value="1"/>
</dbReference>
<dbReference type="Gene3D" id="3.40.1030.10">
    <property type="entry name" value="Nucleoside phosphorylase/phosphoribosyltransferase catalytic domain"/>
    <property type="match status" value="1"/>
</dbReference>
<dbReference type="Gene3D" id="1.20.970.10">
    <property type="entry name" value="Transferase, Pyrimidine Nucleoside Phosphorylase, Chain C"/>
    <property type="match status" value="1"/>
</dbReference>
<dbReference type="HAMAP" id="MF_00211">
    <property type="entry name" value="TrpD"/>
    <property type="match status" value="1"/>
</dbReference>
<dbReference type="InterPro" id="IPR005940">
    <property type="entry name" value="Anthranilate_Pribosyl_Tfrase"/>
</dbReference>
<dbReference type="InterPro" id="IPR000312">
    <property type="entry name" value="Glycosyl_Trfase_fam3"/>
</dbReference>
<dbReference type="InterPro" id="IPR017459">
    <property type="entry name" value="Glycosyl_Trfase_fam3_N_dom"/>
</dbReference>
<dbReference type="InterPro" id="IPR036320">
    <property type="entry name" value="Glycosyl_Trfase_fam3_N_dom_sf"/>
</dbReference>
<dbReference type="InterPro" id="IPR035902">
    <property type="entry name" value="Nuc_phospho_transferase"/>
</dbReference>
<dbReference type="NCBIfam" id="TIGR01245">
    <property type="entry name" value="trpD"/>
    <property type="match status" value="1"/>
</dbReference>
<dbReference type="PANTHER" id="PTHR43285">
    <property type="entry name" value="ANTHRANILATE PHOSPHORIBOSYLTRANSFERASE"/>
    <property type="match status" value="1"/>
</dbReference>
<dbReference type="PANTHER" id="PTHR43285:SF2">
    <property type="entry name" value="ANTHRANILATE PHOSPHORIBOSYLTRANSFERASE"/>
    <property type="match status" value="1"/>
</dbReference>
<dbReference type="Pfam" id="PF02885">
    <property type="entry name" value="Glycos_trans_3N"/>
    <property type="match status" value="1"/>
</dbReference>
<dbReference type="Pfam" id="PF00591">
    <property type="entry name" value="Glycos_transf_3"/>
    <property type="match status" value="1"/>
</dbReference>
<dbReference type="SUPFAM" id="SSF52418">
    <property type="entry name" value="Nucleoside phosphorylase/phosphoribosyltransferase catalytic domain"/>
    <property type="match status" value="1"/>
</dbReference>
<dbReference type="SUPFAM" id="SSF47648">
    <property type="entry name" value="Nucleoside phosphorylase/phosphoribosyltransferase N-terminal domain"/>
    <property type="match status" value="1"/>
</dbReference>
<proteinExistence type="inferred from homology"/>
<organism>
    <name type="scientific">Desulfosudis oleivorans (strain DSM 6200 / JCM 39069 / Hxd3)</name>
    <name type="common">Desulfococcus oleovorans</name>
    <dbReference type="NCBI Taxonomy" id="96561"/>
    <lineage>
        <taxon>Bacteria</taxon>
        <taxon>Pseudomonadati</taxon>
        <taxon>Thermodesulfobacteriota</taxon>
        <taxon>Desulfobacteria</taxon>
        <taxon>Desulfobacterales</taxon>
        <taxon>Desulfosudaceae</taxon>
        <taxon>Desulfosudis</taxon>
    </lineage>
</organism>
<feature type="chain" id="PRO_1000099799" description="Anthranilate phosphoribosyltransferase">
    <location>
        <begin position="1"/>
        <end position="339"/>
    </location>
</feature>
<feature type="binding site" evidence="1">
    <location>
        <position position="80"/>
    </location>
    <ligand>
        <name>5-phospho-alpha-D-ribose 1-diphosphate</name>
        <dbReference type="ChEBI" id="CHEBI:58017"/>
    </ligand>
</feature>
<feature type="binding site" evidence="1">
    <location>
        <position position="80"/>
    </location>
    <ligand>
        <name>anthranilate</name>
        <dbReference type="ChEBI" id="CHEBI:16567"/>
        <label>1</label>
    </ligand>
</feature>
<feature type="binding site" evidence="1">
    <location>
        <begin position="83"/>
        <end position="84"/>
    </location>
    <ligand>
        <name>5-phospho-alpha-D-ribose 1-diphosphate</name>
        <dbReference type="ChEBI" id="CHEBI:58017"/>
    </ligand>
</feature>
<feature type="binding site" evidence="1">
    <location>
        <position position="88"/>
    </location>
    <ligand>
        <name>5-phospho-alpha-D-ribose 1-diphosphate</name>
        <dbReference type="ChEBI" id="CHEBI:58017"/>
    </ligand>
</feature>
<feature type="binding site" evidence="1">
    <location>
        <begin position="90"/>
        <end position="93"/>
    </location>
    <ligand>
        <name>5-phospho-alpha-D-ribose 1-diphosphate</name>
        <dbReference type="ChEBI" id="CHEBI:58017"/>
    </ligand>
</feature>
<feature type="binding site" evidence="1">
    <location>
        <position position="92"/>
    </location>
    <ligand>
        <name>Mg(2+)</name>
        <dbReference type="ChEBI" id="CHEBI:18420"/>
        <label>1</label>
    </ligand>
</feature>
<feature type="binding site" evidence="1">
    <location>
        <begin position="108"/>
        <end position="116"/>
    </location>
    <ligand>
        <name>5-phospho-alpha-D-ribose 1-diphosphate</name>
        <dbReference type="ChEBI" id="CHEBI:58017"/>
    </ligand>
</feature>
<feature type="binding site" evidence="1">
    <location>
        <position position="111"/>
    </location>
    <ligand>
        <name>anthranilate</name>
        <dbReference type="ChEBI" id="CHEBI:16567"/>
        <label>1</label>
    </ligand>
</feature>
<feature type="binding site" evidence="1">
    <location>
        <position position="120"/>
    </location>
    <ligand>
        <name>5-phospho-alpha-D-ribose 1-diphosphate</name>
        <dbReference type="ChEBI" id="CHEBI:58017"/>
    </ligand>
</feature>
<feature type="binding site" evidence="1">
    <location>
        <position position="166"/>
    </location>
    <ligand>
        <name>anthranilate</name>
        <dbReference type="ChEBI" id="CHEBI:16567"/>
        <label>2</label>
    </ligand>
</feature>
<feature type="binding site" evidence="1">
    <location>
        <position position="225"/>
    </location>
    <ligand>
        <name>Mg(2+)</name>
        <dbReference type="ChEBI" id="CHEBI:18420"/>
        <label>2</label>
    </ligand>
</feature>
<feature type="binding site" evidence="1">
    <location>
        <position position="226"/>
    </location>
    <ligand>
        <name>Mg(2+)</name>
        <dbReference type="ChEBI" id="CHEBI:18420"/>
        <label>1</label>
    </ligand>
</feature>
<feature type="binding site" evidence="1">
    <location>
        <position position="226"/>
    </location>
    <ligand>
        <name>Mg(2+)</name>
        <dbReference type="ChEBI" id="CHEBI:18420"/>
        <label>2</label>
    </ligand>
</feature>
<name>TRPD_DESOH</name>
<reference key="1">
    <citation type="submission" date="2007-10" db="EMBL/GenBank/DDBJ databases">
        <title>Complete sequence of Desulfococcus oleovorans Hxd3.</title>
        <authorList>
            <consortium name="US DOE Joint Genome Institute"/>
            <person name="Copeland A."/>
            <person name="Lucas S."/>
            <person name="Lapidus A."/>
            <person name="Barry K."/>
            <person name="Glavina del Rio T."/>
            <person name="Dalin E."/>
            <person name="Tice H."/>
            <person name="Pitluck S."/>
            <person name="Kiss H."/>
            <person name="Brettin T."/>
            <person name="Bruce D."/>
            <person name="Detter J.C."/>
            <person name="Han C."/>
            <person name="Schmutz J."/>
            <person name="Larimer F."/>
            <person name="Land M."/>
            <person name="Hauser L."/>
            <person name="Kyrpides N."/>
            <person name="Kim E."/>
            <person name="Wawrik B."/>
            <person name="Richardson P."/>
        </authorList>
    </citation>
    <scope>NUCLEOTIDE SEQUENCE [LARGE SCALE GENOMIC DNA]</scope>
    <source>
        <strain>DSM 6200 / JCM 39069 / Hxd3</strain>
    </source>
</reference>
<accession>A8ZZX1</accession>
<gene>
    <name evidence="1" type="primary">trpD</name>
    <name type="ordered locus">Dole_1567</name>
</gene>